<reference key="1">
    <citation type="journal article" date="2006" name="PLoS Genet.">
        <title>Genome sequence of Rickettsia bellii illuminates the role of amoebae in gene exchanges between intracellular pathogens.</title>
        <authorList>
            <person name="Ogata H."/>
            <person name="La Scola B."/>
            <person name="Audic S."/>
            <person name="Renesto P."/>
            <person name="Blanc G."/>
            <person name="Robert C."/>
            <person name="Fournier P.-E."/>
            <person name="Claverie J.-M."/>
            <person name="Raoult D."/>
        </authorList>
    </citation>
    <scope>NUCLEOTIDE SEQUENCE [LARGE SCALE GENOMIC DNA]</scope>
    <source>
        <strain>RML369-C</strain>
    </source>
</reference>
<sequence>MLADKKIVKVEVSKEHLKTLNEASTLLISCVDFRLIDETDKLMKQLGLEDDFDKVSLPGASLALVNEKYTHWGKTIEDTIEILQDLHNIKQIIFLDHRECGAYKKLIAEERLSTKEKETEAHTEILNKARKIIKEKFPQLKVYTFLMGLDGVIEQIYERHPADC</sequence>
<dbReference type="EMBL" id="CP000087">
    <property type="protein sequence ID" value="ABE04090.1"/>
    <property type="molecule type" value="Genomic_DNA"/>
</dbReference>
<dbReference type="KEGG" id="rbe:RBE_0009"/>
<dbReference type="eggNOG" id="COG0288">
    <property type="taxonomic scope" value="Bacteria"/>
</dbReference>
<dbReference type="HOGENOM" id="CLU_125832_0_0_5"/>
<dbReference type="OrthoDB" id="288525at2"/>
<dbReference type="Proteomes" id="UP000001951">
    <property type="component" value="Chromosome"/>
</dbReference>
<dbReference type="GO" id="GO:0004089">
    <property type="term" value="F:carbonate dehydratase activity"/>
    <property type="evidence" value="ECO:0007669"/>
    <property type="project" value="InterPro"/>
</dbReference>
<dbReference type="GO" id="GO:0008270">
    <property type="term" value="F:zinc ion binding"/>
    <property type="evidence" value="ECO:0007669"/>
    <property type="project" value="InterPro"/>
</dbReference>
<dbReference type="Gene3D" id="3.40.1050.10">
    <property type="entry name" value="Carbonic anhydrase"/>
    <property type="match status" value="1"/>
</dbReference>
<dbReference type="InterPro" id="IPR036874">
    <property type="entry name" value="Carbonic_anhydrase_sf"/>
</dbReference>
<dbReference type="InterPro" id="IPR046871">
    <property type="entry name" value="Pro_CA_2"/>
</dbReference>
<dbReference type="Pfam" id="PF20393">
    <property type="entry name" value="Pro_CA_2"/>
    <property type="match status" value="1"/>
</dbReference>
<dbReference type="SUPFAM" id="SSF53056">
    <property type="entry name" value="beta-carbonic anhydrase, cab"/>
    <property type="match status" value="1"/>
</dbReference>
<organism>
    <name type="scientific">Rickettsia bellii (strain RML369-C)</name>
    <dbReference type="NCBI Taxonomy" id="336407"/>
    <lineage>
        <taxon>Bacteria</taxon>
        <taxon>Pseudomonadati</taxon>
        <taxon>Pseudomonadota</taxon>
        <taxon>Alphaproteobacteria</taxon>
        <taxon>Rickettsiales</taxon>
        <taxon>Rickettsiaceae</taxon>
        <taxon>Rickettsieae</taxon>
        <taxon>Rickettsia</taxon>
        <taxon>belli group</taxon>
    </lineage>
</organism>
<accession>Q1RKM4</accession>
<protein>
    <recommendedName>
        <fullName>Uncharacterized protein RBE_0009</fullName>
    </recommendedName>
</protein>
<gene>
    <name type="ordered locus">RBE_0009</name>
</gene>
<name>Y009_RICBR</name>
<feature type="chain" id="PRO_0000260002" description="Uncharacterized protein RBE_0009">
    <location>
        <begin position="1"/>
        <end position="164"/>
    </location>
</feature>
<proteinExistence type="predicted"/>